<dbReference type="EC" id="2.4.2.18" evidence="1"/>
<dbReference type="EMBL" id="CP000108">
    <property type="protein sequence ID" value="ABB28992.1"/>
    <property type="molecule type" value="Genomic_DNA"/>
</dbReference>
<dbReference type="SMR" id="Q3APT3"/>
<dbReference type="STRING" id="340177.Cag_1741"/>
<dbReference type="KEGG" id="cch:Cag_1741"/>
<dbReference type="eggNOG" id="COG0547">
    <property type="taxonomic scope" value="Bacteria"/>
</dbReference>
<dbReference type="HOGENOM" id="CLU_034315_2_1_10"/>
<dbReference type="OrthoDB" id="9806430at2"/>
<dbReference type="UniPathway" id="UPA00035">
    <property type="reaction ID" value="UER00041"/>
</dbReference>
<dbReference type="GO" id="GO:0005829">
    <property type="term" value="C:cytosol"/>
    <property type="evidence" value="ECO:0007669"/>
    <property type="project" value="TreeGrafter"/>
</dbReference>
<dbReference type="GO" id="GO:0004048">
    <property type="term" value="F:anthranilate phosphoribosyltransferase activity"/>
    <property type="evidence" value="ECO:0007669"/>
    <property type="project" value="UniProtKB-UniRule"/>
</dbReference>
<dbReference type="GO" id="GO:0000287">
    <property type="term" value="F:magnesium ion binding"/>
    <property type="evidence" value="ECO:0007669"/>
    <property type="project" value="UniProtKB-UniRule"/>
</dbReference>
<dbReference type="GO" id="GO:0000162">
    <property type="term" value="P:L-tryptophan biosynthetic process"/>
    <property type="evidence" value="ECO:0007669"/>
    <property type="project" value="UniProtKB-UniRule"/>
</dbReference>
<dbReference type="FunFam" id="3.40.1030.10:FF:000002">
    <property type="entry name" value="Anthranilate phosphoribosyltransferase"/>
    <property type="match status" value="1"/>
</dbReference>
<dbReference type="Gene3D" id="3.40.1030.10">
    <property type="entry name" value="Nucleoside phosphorylase/phosphoribosyltransferase catalytic domain"/>
    <property type="match status" value="1"/>
</dbReference>
<dbReference type="Gene3D" id="1.20.970.10">
    <property type="entry name" value="Transferase, Pyrimidine Nucleoside Phosphorylase, Chain C"/>
    <property type="match status" value="1"/>
</dbReference>
<dbReference type="HAMAP" id="MF_00211">
    <property type="entry name" value="TrpD"/>
    <property type="match status" value="1"/>
</dbReference>
<dbReference type="InterPro" id="IPR005940">
    <property type="entry name" value="Anthranilate_Pribosyl_Tfrase"/>
</dbReference>
<dbReference type="InterPro" id="IPR000312">
    <property type="entry name" value="Glycosyl_Trfase_fam3"/>
</dbReference>
<dbReference type="InterPro" id="IPR017459">
    <property type="entry name" value="Glycosyl_Trfase_fam3_N_dom"/>
</dbReference>
<dbReference type="InterPro" id="IPR036320">
    <property type="entry name" value="Glycosyl_Trfase_fam3_N_dom_sf"/>
</dbReference>
<dbReference type="InterPro" id="IPR035902">
    <property type="entry name" value="Nuc_phospho_transferase"/>
</dbReference>
<dbReference type="NCBIfam" id="TIGR01245">
    <property type="entry name" value="trpD"/>
    <property type="match status" value="1"/>
</dbReference>
<dbReference type="PANTHER" id="PTHR43285">
    <property type="entry name" value="ANTHRANILATE PHOSPHORIBOSYLTRANSFERASE"/>
    <property type="match status" value="1"/>
</dbReference>
<dbReference type="PANTHER" id="PTHR43285:SF2">
    <property type="entry name" value="ANTHRANILATE PHOSPHORIBOSYLTRANSFERASE"/>
    <property type="match status" value="1"/>
</dbReference>
<dbReference type="Pfam" id="PF02885">
    <property type="entry name" value="Glycos_trans_3N"/>
    <property type="match status" value="1"/>
</dbReference>
<dbReference type="Pfam" id="PF00591">
    <property type="entry name" value="Glycos_transf_3"/>
    <property type="match status" value="1"/>
</dbReference>
<dbReference type="SUPFAM" id="SSF52418">
    <property type="entry name" value="Nucleoside phosphorylase/phosphoribosyltransferase catalytic domain"/>
    <property type="match status" value="1"/>
</dbReference>
<dbReference type="SUPFAM" id="SSF47648">
    <property type="entry name" value="Nucleoside phosphorylase/phosphoribosyltransferase N-terminal domain"/>
    <property type="match status" value="1"/>
</dbReference>
<name>TRPD_CHLCH</name>
<comment type="function">
    <text evidence="1">Catalyzes the transfer of the phosphoribosyl group of 5-phosphorylribose-1-pyrophosphate (PRPP) to anthranilate to yield N-(5'-phosphoribosyl)-anthranilate (PRA).</text>
</comment>
<comment type="catalytic activity">
    <reaction evidence="1">
        <text>N-(5-phospho-beta-D-ribosyl)anthranilate + diphosphate = 5-phospho-alpha-D-ribose 1-diphosphate + anthranilate</text>
        <dbReference type="Rhea" id="RHEA:11768"/>
        <dbReference type="ChEBI" id="CHEBI:16567"/>
        <dbReference type="ChEBI" id="CHEBI:18277"/>
        <dbReference type="ChEBI" id="CHEBI:33019"/>
        <dbReference type="ChEBI" id="CHEBI:58017"/>
        <dbReference type="EC" id="2.4.2.18"/>
    </reaction>
</comment>
<comment type="cofactor">
    <cofactor evidence="1">
        <name>Mg(2+)</name>
        <dbReference type="ChEBI" id="CHEBI:18420"/>
    </cofactor>
    <text evidence="1">Binds 2 magnesium ions per monomer.</text>
</comment>
<comment type="pathway">
    <text evidence="1">Amino-acid biosynthesis; L-tryptophan biosynthesis; L-tryptophan from chorismate: step 2/5.</text>
</comment>
<comment type="subunit">
    <text evidence="1">Homodimer.</text>
</comment>
<comment type="similarity">
    <text evidence="1">Belongs to the anthranilate phosphoribosyltransferase family.</text>
</comment>
<accession>Q3APT3</accession>
<organism>
    <name type="scientific">Chlorobium chlorochromatii (strain CaD3)</name>
    <dbReference type="NCBI Taxonomy" id="340177"/>
    <lineage>
        <taxon>Bacteria</taxon>
        <taxon>Pseudomonadati</taxon>
        <taxon>Chlorobiota</taxon>
        <taxon>Chlorobiia</taxon>
        <taxon>Chlorobiales</taxon>
        <taxon>Chlorobiaceae</taxon>
        <taxon>Chlorobium/Pelodictyon group</taxon>
        <taxon>Chlorobium</taxon>
    </lineage>
</organism>
<feature type="chain" id="PRO_0000227146" description="Anthranilate phosphoribosyltransferase">
    <location>
        <begin position="1"/>
        <end position="351"/>
    </location>
</feature>
<feature type="binding site" evidence="1">
    <location>
        <position position="80"/>
    </location>
    <ligand>
        <name>5-phospho-alpha-D-ribose 1-diphosphate</name>
        <dbReference type="ChEBI" id="CHEBI:58017"/>
    </ligand>
</feature>
<feature type="binding site" evidence="1">
    <location>
        <position position="80"/>
    </location>
    <ligand>
        <name>anthranilate</name>
        <dbReference type="ChEBI" id="CHEBI:16567"/>
        <label>1</label>
    </ligand>
</feature>
<feature type="binding site" evidence="1">
    <location>
        <begin position="83"/>
        <end position="84"/>
    </location>
    <ligand>
        <name>5-phospho-alpha-D-ribose 1-diphosphate</name>
        <dbReference type="ChEBI" id="CHEBI:58017"/>
    </ligand>
</feature>
<feature type="binding site" evidence="1">
    <location>
        <position position="88"/>
    </location>
    <ligand>
        <name>5-phospho-alpha-D-ribose 1-diphosphate</name>
        <dbReference type="ChEBI" id="CHEBI:58017"/>
    </ligand>
</feature>
<feature type="binding site" evidence="1">
    <location>
        <begin position="90"/>
        <end position="93"/>
    </location>
    <ligand>
        <name>5-phospho-alpha-D-ribose 1-diphosphate</name>
        <dbReference type="ChEBI" id="CHEBI:58017"/>
    </ligand>
</feature>
<feature type="binding site" evidence="1">
    <location>
        <position position="92"/>
    </location>
    <ligand>
        <name>Mg(2+)</name>
        <dbReference type="ChEBI" id="CHEBI:18420"/>
        <label>1</label>
    </ligand>
</feature>
<feature type="binding site" evidence="1">
    <location>
        <begin position="108"/>
        <end position="116"/>
    </location>
    <ligand>
        <name>5-phospho-alpha-D-ribose 1-diphosphate</name>
        <dbReference type="ChEBI" id="CHEBI:58017"/>
    </ligand>
</feature>
<feature type="binding site" evidence="1">
    <location>
        <position position="111"/>
    </location>
    <ligand>
        <name>anthranilate</name>
        <dbReference type="ChEBI" id="CHEBI:16567"/>
        <label>1</label>
    </ligand>
</feature>
<feature type="binding site" evidence="1">
    <location>
        <position position="120"/>
    </location>
    <ligand>
        <name>5-phospho-alpha-D-ribose 1-diphosphate</name>
        <dbReference type="ChEBI" id="CHEBI:58017"/>
    </ligand>
</feature>
<feature type="binding site" evidence="1">
    <location>
        <position position="166"/>
    </location>
    <ligand>
        <name>anthranilate</name>
        <dbReference type="ChEBI" id="CHEBI:16567"/>
        <label>2</label>
    </ligand>
</feature>
<feature type="binding site" evidence="1">
    <location>
        <position position="229"/>
    </location>
    <ligand>
        <name>Mg(2+)</name>
        <dbReference type="ChEBI" id="CHEBI:18420"/>
        <label>2</label>
    </ligand>
</feature>
<feature type="binding site" evidence="1">
    <location>
        <position position="230"/>
    </location>
    <ligand>
        <name>Mg(2+)</name>
        <dbReference type="ChEBI" id="CHEBI:18420"/>
        <label>1</label>
    </ligand>
</feature>
<feature type="binding site" evidence="1">
    <location>
        <position position="230"/>
    </location>
    <ligand>
        <name>Mg(2+)</name>
        <dbReference type="ChEBI" id="CHEBI:18420"/>
        <label>2</label>
    </ligand>
</feature>
<protein>
    <recommendedName>
        <fullName evidence="1">Anthranilate phosphoribosyltransferase</fullName>
        <ecNumber evidence="1">2.4.2.18</ecNumber>
    </recommendedName>
</protein>
<evidence type="ECO:0000255" key="1">
    <source>
        <dbReference type="HAMAP-Rule" id="MF_00211"/>
    </source>
</evidence>
<keyword id="KW-0028">Amino-acid biosynthesis</keyword>
<keyword id="KW-0057">Aromatic amino acid biosynthesis</keyword>
<keyword id="KW-0328">Glycosyltransferase</keyword>
<keyword id="KW-0460">Magnesium</keyword>
<keyword id="KW-0479">Metal-binding</keyword>
<keyword id="KW-0808">Transferase</keyword>
<keyword id="KW-0822">Tryptophan biosynthesis</keyword>
<proteinExistence type="inferred from homology"/>
<sequence length="351" mass="37205">MESKQLLQKLLAGEHCSKEEMQDCMNSIMDGEFSDSVIAALLALLQKKGVVANELAGAHASLMAHATTVALSTHAVDTCGTGGDHGGTYNISTTASLIACSAGVRVAKHGNRSVTSSCGSADVLEALGFTLELPPEATISLFKKTGFAFLFAPLYHPSMKRVAHIRRELGIRTLFNMLGPLLNPAQVKRQLVGVFSEELSELYADVLLQTGARHALIVHASTEEGVILDEPSLNGTTFVTEIEKGVVRKHTLRPEEFGIAPAPLAALQGGDKEHNARIIQSIADGSASAAQRDAALYSSAMACYVGGKCACLNDGFIVAKEALESGKTQAKLKEIIAYNQALVTEYHVAKS</sequence>
<reference key="1">
    <citation type="submission" date="2005-08" db="EMBL/GenBank/DDBJ databases">
        <title>Complete sequence of Chlorobium chlorochromatii CaD3.</title>
        <authorList>
            <consortium name="US DOE Joint Genome Institute"/>
            <person name="Copeland A."/>
            <person name="Lucas S."/>
            <person name="Lapidus A."/>
            <person name="Barry K."/>
            <person name="Detter J.C."/>
            <person name="Glavina T."/>
            <person name="Hammon N."/>
            <person name="Israni S."/>
            <person name="Pitluck S."/>
            <person name="Bryant D."/>
            <person name="Schmutz J."/>
            <person name="Larimer F."/>
            <person name="Land M."/>
            <person name="Kyrpides N."/>
            <person name="Ivanova N."/>
            <person name="Richardson P."/>
        </authorList>
    </citation>
    <scope>NUCLEOTIDE SEQUENCE [LARGE SCALE GENOMIC DNA]</scope>
    <source>
        <strain>CaD3</strain>
    </source>
</reference>
<gene>
    <name evidence="1" type="primary">trpD</name>
    <name type="ordered locus">Cag_1741</name>
</gene>